<comment type="function">
    <text evidence="1">Responsible for the release of ribosomes from messenger RNA at the termination of protein biosynthesis. May increase the efficiency of translation by recycling ribosomes from one round of translation to another.</text>
</comment>
<comment type="subcellular location">
    <subcellularLocation>
        <location evidence="1">Cytoplasm</location>
    </subcellularLocation>
</comment>
<comment type="similarity">
    <text evidence="1">Belongs to the RRF family.</text>
</comment>
<proteinExistence type="inferred from homology"/>
<dbReference type="EMBL" id="AE014184">
    <property type="protein sequence ID" value="AAO44543.1"/>
    <property type="molecule type" value="Genomic_DNA"/>
</dbReference>
<dbReference type="SMR" id="Q83G73"/>
<dbReference type="STRING" id="203267.TWT_446"/>
<dbReference type="KEGG" id="twh:TWT_446"/>
<dbReference type="eggNOG" id="COG0233">
    <property type="taxonomic scope" value="Bacteria"/>
</dbReference>
<dbReference type="HOGENOM" id="CLU_073981_2_0_11"/>
<dbReference type="OrthoDB" id="9804006at2"/>
<dbReference type="Proteomes" id="UP000002200">
    <property type="component" value="Chromosome"/>
</dbReference>
<dbReference type="GO" id="GO:0005737">
    <property type="term" value="C:cytoplasm"/>
    <property type="evidence" value="ECO:0007669"/>
    <property type="project" value="UniProtKB-SubCell"/>
</dbReference>
<dbReference type="GO" id="GO:0043023">
    <property type="term" value="F:ribosomal large subunit binding"/>
    <property type="evidence" value="ECO:0007669"/>
    <property type="project" value="TreeGrafter"/>
</dbReference>
<dbReference type="GO" id="GO:0006415">
    <property type="term" value="P:translational termination"/>
    <property type="evidence" value="ECO:0007669"/>
    <property type="project" value="UniProtKB-UniRule"/>
</dbReference>
<dbReference type="Gene3D" id="3.30.1360.40">
    <property type="match status" value="1"/>
</dbReference>
<dbReference type="Gene3D" id="1.10.132.20">
    <property type="entry name" value="Ribosome-recycling factor"/>
    <property type="match status" value="1"/>
</dbReference>
<dbReference type="HAMAP" id="MF_00040">
    <property type="entry name" value="RRF"/>
    <property type="match status" value="1"/>
</dbReference>
<dbReference type="InterPro" id="IPR002661">
    <property type="entry name" value="Ribosome_recyc_fac"/>
</dbReference>
<dbReference type="InterPro" id="IPR023584">
    <property type="entry name" value="Ribosome_recyc_fac_dom"/>
</dbReference>
<dbReference type="InterPro" id="IPR036191">
    <property type="entry name" value="RRF_sf"/>
</dbReference>
<dbReference type="PANTHER" id="PTHR20982:SF3">
    <property type="entry name" value="MITOCHONDRIAL RIBOSOME RECYCLING FACTOR PSEUDO 1"/>
    <property type="match status" value="1"/>
</dbReference>
<dbReference type="PANTHER" id="PTHR20982">
    <property type="entry name" value="RIBOSOME RECYCLING FACTOR"/>
    <property type="match status" value="1"/>
</dbReference>
<dbReference type="Pfam" id="PF01765">
    <property type="entry name" value="RRF"/>
    <property type="match status" value="1"/>
</dbReference>
<dbReference type="SUPFAM" id="SSF55194">
    <property type="entry name" value="Ribosome recycling factor, RRF"/>
    <property type="match status" value="1"/>
</dbReference>
<keyword id="KW-0963">Cytoplasm</keyword>
<keyword id="KW-0648">Protein biosynthesis</keyword>
<keyword id="KW-1185">Reference proteome</keyword>
<sequence length="181" mass="20208">MGIMCSGDVSERMNKTIELLKEQFLSIHSGRVNSGQFEKVMVDCEGASVPLVSLASIRVLNANTIVVTPYDSALLSQIDRALRNVPNIGTPGNDGECIKIVMPQLTEARRHEYVKQARVKAEEARVSARNIRRKARASLDAMGLAKDEIVRREKELDKLTKDVISVVDDLLRHKESELLRL</sequence>
<feature type="chain" id="PRO_0000167572" description="Ribosome-recycling factor">
    <location>
        <begin position="1"/>
        <end position="181"/>
    </location>
</feature>
<accession>Q83G73</accession>
<name>RRF_TROWT</name>
<reference key="1">
    <citation type="journal article" date="2003" name="Genome Res.">
        <title>Tropheryma whipplei twist: a human pathogenic Actinobacteria with a reduced genome.</title>
        <authorList>
            <person name="Raoult D."/>
            <person name="Ogata H."/>
            <person name="Audic S."/>
            <person name="Robert C."/>
            <person name="Suhre K."/>
            <person name="Drancourt M."/>
            <person name="Claverie J.-M."/>
        </authorList>
    </citation>
    <scope>NUCLEOTIDE SEQUENCE [LARGE SCALE GENOMIC DNA]</scope>
    <source>
        <strain>Twist</strain>
    </source>
</reference>
<protein>
    <recommendedName>
        <fullName evidence="1">Ribosome-recycling factor</fullName>
        <shortName evidence="1">RRF</shortName>
    </recommendedName>
    <alternativeName>
        <fullName evidence="1">Ribosome-releasing factor</fullName>
    </alternativeName>
</protein>
<evidence type="ECO:0000255" key="1">
    <source>
        <dbReference type="HAMAP-Rule" id="MF_00040"/>
    </source>
</evidence>
<organism>
    <name type="scientific">Tropheryma whipplei (strain Twist)</name>
    <name type="common">Whipple's bacillus</name>
    <dbReference type="NCBI Taxonomy" id="203267"/>
    <lineage>
        <taxon>Bacteria</taxon>
        <taxon>Bacillati</taxon>
        <taxon>Actinomycetota</taxon>
        <taxon>Actinomycetes</taxon>
        <taxon>Micrococcales</taxon>
        <taxon>Tropherymataceae</taxon>
        <taxon>Tropheryma</taxon>
    </lineage>
</organism>
<gene>
    <name evidence="1" type="primary">frr</name>
    <name type="ordered locus">TWT_446</name>
</gene>